<feature type="initiator methionine" description="Removed" evidence="1">
    <location>
        <position position="1"/>
    </location>
</feature>
<feature type="chain" id="PRO_0000180862" description="Flagellar hook-associated protein 1">
    <location>
        <begin position="2"/>
        <end position="547"/>
    </location>
</feature>
<name>FLGK_ECOLI</name>
<gene>
    <name type="primary">flgK</name>
    <name type="synonym">flaS</name>
    <name type="synonym">flaW</name>
    <name type="ordered locus">b1082</name>
    <name type="ordered locus">JW1069</name>
</gene>
<dbReference type="EMBL" id="U00096">
    <property type="protein sequence ID" value="AAC74166.1"/>
    <property type="molecule type" value="Genomic_DNA"/>
</dbReference>
<dbReference type="EMBL" id="AP009048">
    <property type="protein sequence ID" value="BAA35891.1"/>
    <property type="molecule type" value="Genomic_DNA"/>
</dbReference>
<dbReference type="EMBL" id="U02514">
    <property type="protein sequence ID" value="AAA18321.1"/>
    <property type="molecule type" value="Unassigned_DNA"/>
</dbReference>
<dbReference type="PIR" id="G64851">
    <property type="entry name" value="G64851"/>
</dbReference>
<dbReference type="RefSeq" id="NP_415600.1">
    <property type="nucleotide sequence ID" value="NC_000913.3"/>
</dbReference>
<dbReference type="RefSeq" id="WP_000096479.1">
    <property type="nucleotide sequence ID" value="NZ_LN832404.1"/>
</dbReference>
<dbReference type="SMR" id="P33235"/>
<dbReference type="BioGRID" id="4261021">
    <property type="interactions" value="12"/>
</dbReference>
<dbReference type="BioGRID" id="850020">
    <property type="interactions" value="2"/>
</dbReference>
<dbReference type="DIP" id="DIP-9639N"/>
<dbReference type="FunCoup" id="P33235">
    <property type="interactions" value="115"/>
</dbReference>
<dbReference type="IntAct" id="P33235">
    <property type="interactions" value="7"/>
</dbReference>
<dbReference type="STRING" id="511145.b1082"/>
<dbReference type="PaxDb" id="511145-b1082"/>
<dbReference type="EnsemblBacteria" id="AAC74166">
    <property type="protein sequence ID" value="AAC74166"/>
    <property type="gene ID" value="b1082"/>
</dbReference>
<dbReference type="GeneID" id="945648"/>
<dbReference type="KEGG" id="ecj:JW1069"/>
<dbReference type="KEGG" id="eco:b1082"/>
<dbReference type="KEGG" id="ecoc:C3026_06555"/>
<dbReference type="PATRIC" id="fig|1411691.4.peg.1186"/>
<dbReference type="EchoBASE" id="EB1910"/>
<dbReference type="eggNOG" id="COG1256">
    <property type="taxonomic scope" value="Bacteria"/>
</dbReference>
<dbReference type="HOGENOM" id="CLU_012762_0_1_6"/>
<dbReference type="InParanoid" id="P33235"/>
<dbReference type="OMA" id="MIQFQHA"/>
<dbReference type="OrthoDB" id="9802553at2"/>
<dbReference type="PhylomeDB" id="P33235"/>
<dbReference type="BioCyc" id="EcoCyc:EG11967-MONOMER"/>
<dbReference type="PRO" id="PR:P33235"/>
<dbReference type="Proteomes" id="UP000000625">
    <property type="component" value="Chromosome"/>
</dbReference>
<dbReference type="GO" id="GO:0009424">
    <property type="term" value="C:bacterial-type flagellum hook"/>
    <property type="evidence" value="ECO:0007669"/>
    <property type="project" value="InterPro"/>
</dbReference>
<dbReference type="GO" id="GO:0005576">
    <property type="term" value="C:extracellular region"/>
    <property type="evidence" value="ECO:0007669"/>
    <property type="project" value="UniProtKB-SubCell"/>
</dbReference>
<dbReference type="GO" id="GO:0005198">
    <property type="term" value="F:structural molecule activity"/>
    <property type="evidence" value="ECO:0007669"/>
    <property type="project" value="InterPro"/>
</dbReference>
<dbReference type="GO" id="GO:0044780">
    <property type="term" value="P:bacterial-type flagellum assembly"/>
    <property type="evidence" value="ECO:0000315"/>
    <property type="project" value="EcoCyc"/>
</dbReference>
<dbReference type="InterPro" id="IPR001444">
    <property type="entry name" value="Flag_bb_rod_N"/>
</dbReference>
<dbReference type="InterPro" id="IPR010930">
    <property type="entry name" value="Flg_bb/hook_C_dom"/>
</dbReference>
<dbReference type="InterPro" id="IPR002371">
    <property type="entry name" value="FlgK"/>
</dbReference>
<dbReference type="InterPro" id="IPR049119">
    <property type="entry name" value="FlgK_D2-like"/>
</dbReference>
<dbReference type="InterPro" id="IPR053927">
    <property type="entry name" value="FlgK_helical"/>
</dbReference>
<dbReference type="NCBIfam" id="TIGR02492">
    <property type="entry name" value="flgK_ends"/>
    <property type="match status" value="1"/>
</dbReference>
<dbReference type="PANTHER" id="PTHR30033">
    <property type="entry name" value="FLAGELLAR HOOK-ASSOCIATED PROTEIN 1"/>
    <property type="match status" value="1"/>
</dbReference>
<dbReference type="PANTHER" id="PTHR30033:SF1">
    <property type="entry name" value="FLAGELLAR HOOK-ASSOCIATED PROTEIN 1"/>
    <property type="match status" value="1"/>
</dbReference>
<dbReference type="Pfam" id="PF00460">
    <property type="entry name" value="Flg_bb_rod"/>
    <property type="match status" value="1"/>
</dbReference>
<dbReference type="Pfam" id="PF06429">
    <property type="entry name" value="Flg_bbr_C"/>
    <property type="match status" value="1"/>
</dbReference>
<dbReference type="Pfam" id="PF21158">
    <property type="entry name" value="flgK_1st_1"/>
    <property type="match status" value="1"/>
</dbReference>
<dbReference type="Pfam" id="PF22638">
    <property type="entry name" value="FlgK_D1"/>
    <property type="match status" value="1"/>
</dbReference>
<dbReference type="PRINTS" id="PR01005">
    <property type="entry name" value="FLGHOOKAP1"/>
</dbReference>
<dbReference type="SUPFAM" id="SSF64518">
    <property type="entry name" value="Phase 1 flagellin"/>
    <property type="match status" value="1"/>
</dbReference>
<organism>
    <name type="scientific">Escherichia coli (strain K12)</name>
    <dbReference type="NCBI Taxonomy" id="83333"/>
    <lineage>
        <taxon>Bacteria</taxon>
        <taxon>Pseudomonadati</taxon>
        <taxon>Pseudomonadota</taxon>
        <taxon>Gammaproteobacteria</taxon>
        <taxon>Enterobacterales</taxon>
        <taxon>Enterobacteriaceae</taxon>
        <taxon>Escherichia</taxon>
    </lineage>
</organism>
<protein>
    <recommendedName>
        <fullName>Flagellar hook-associated protein 1</fullName>
        <shortName>HAP1</shortName>
    </recommendedName>
</protein>
<keyword id="KW-0975">Bacterial flagellum</keyword>
<keyword id="KW-1185">Reference proteome</keyword>
<keyword id="KW-0964">Secreted</keyword>
<reference key="1">
    <citation type="journal article" date="1996" name="DNA Res.">
        <title>A 718-kb DNA sequence of the Escherichia coli K-12 genome corresponding to the 12.7-28.0 min region on the linkage map.</title>
        <authorList>
            <person name="Oshima T."/>
            <person name="Aiba H."/>
            <person name="Baba T."/>
            <person name="Fujita K."/>
            <person name="Hayashi K."/>
            <person name="Honjo A."/>
            <person name="Ikemoto K."/>
            <person name="Inada T."/>
            <person name="Itoh T."/>
            <person name="Kajihara M."/>
            <person name="Kanai K."/>
            <person name="Kashimoto K."/>
            <person name="Kimura S."/>
            <person name="Kitagawa M."/>
            <person name="Makino K."/>
            <person name="Masuda S."/>
            <person name="Miki T."/>
            <person name="Mizobuchi K."/>
            <person name="Mori H."/>
            <person name="Motomura K."/>
            <person name="Nakamura Y."/>
            <person name="Nashimoto H."/>
            <person name="Nishio Y."/>
            <person name="Saito N."/>
            <person name="Sampei G."/>
            <person name="Seki Y."/>
            <person name="Tagami H."/>
            <person name="Takemoto K."/>
            <person name="Wada C."/>
            <person name="Yamamoto Y."/>
            <person name="Yano M."/>
            <person name="Horiuchi T."/>
        </authorList>
    </citation>
    <scope>NUCLEOTIDE SEQUENCE [LARGE SCALE GENOMIC DNA]</scope>
    <source>
        <strain>K12 / W3110 / ATCC 27325 / DSM 5911</strain>
    </source>
</reference>
<reference key="2">
    <citation type="journal article" date="1997" name="Science">
        <title>The complete genome sequence of Escherichia coli K-12.</title>
        <authorList>
            <person name="Blattner F.R."/>
            <person name="Plunkett G. III"/>
            <person name="Bloch C.A."/>
            <person name="Perna N.T."/>
            <person name="Burland V."/>
            <person name="Riley M."/>
            <person name="Collado-Vides J."/>
            <person name="Glasner J.D."/>
            <person name="Rode C.K."/>
            <person name="Mayhew G.F."/>
            <person name="Gregor J."/>
            <person name="Davis N.W."/>
            <person name="Kirkpatrick H.A."/>
            <person name="Goeden M.A."/>
            <person name="Rose D.J."/>
            <person name="Mau B."/>
            <person name="Shao Y."/>
        </authorList>
    </citation>
    <scope>NUCLEOTIDE SEQUENCE [LARGE SCALE GENOMIC DNA]</scope>
    <source>
        <strain>K12 / MG1655 / ATCC 47076</strain>
    </source>
</reference>
<reference key="3">
    <citation type="journal article" date="2006" name="Mol. Syst. Biol.">
        <title>Highly accurate genome sequences of Escherichia coli K-12 strains MG1655 and W3110.</title>
        <authorList>
            <person name="Hayashi K."/>
            <person name="Morooka N."/>
            <person name="Yamamoto Y."/>
            <person name="Fujita K."/>
            <person name="Isono K."/>
            <person name="Choi S."/>
            <person name="Ohtsubo E."/>
            <person name="Baba T."/>
            <person name="Wanner B.L."/>
            <person name="Mori H."/>
            <person name="Horiuchi T."/>
        </authorList>
    </citation>
    <scope>NUCLEOTIDE SEQUENCE [LARGE SCALE GENOMIC DNA]</scope>
    <source>
        <strain>K12 / W3110 / ATCC 27325 / DSM 5911</strain>
    </source>
</reference>
<reference key="4">
    <citation type="journal article" date="1994" name="J. Mol. Biol.">
        <title>A mutant hook-associated protein (HAP3) facilitates torsionally induced transformations of the flagellar filament of Escherichia coli.</title>
        <authorList>
            <person name="Fahrner K.A."/>
            <person name="Block S.M."/>
            <person name="Krishnaswamy S."/>
            <person name="Parkinson J.S."/>
            <person name="Berg H.C."/>
        </authorList>
    </citation>
    <scope>NUCLEOTIDE SEQUENCE [GENOMIC DNA] OF 536-547</scope>
    <source>
        <strain>K12 / CS520</strain>
    </source>
</reference>
<accession>P33235</accession>
<accession>P77680</accession>
<evidence type="ECO:0000250" key="1"/>
<evidence type="ECO:0000305" key="2"/>
<proteinExistence type="evidence at protein level"/>
<comment type="interaction">
    <interactant intactId="EBI-551382">
        <id>P33235</id>
    </interactant>
    <interactant intactId="EBI-1121833">
        <id>P43533</id>
        <label>flgN</label>
    </interactant>
    <organismsDiffer>false</organismsDiffer>
    <experiments>3</experiments>
</comment>
<comment type="subcellular location">
    <subcellularLocation>
        <location evidence="1">Secreted</location>
    </subcellularLocation>
    <subcellularLocation>
        <location evidence="1">Bacterial flagellum</location>
    </subcellularLocation>
</comment>
<comment type="similarity">
    <text evidence="2">Belongs to the flagella basal body rod proteins family.</text>
</comment>
<sequence>MSSLINNAMSGLNAAQAALNTASNNISSYNVAGYTRQTTIMAQANSTLGAGGWVGNGVYVSGVQREYDAFITNQLRAAQTQSSGLTARYEQMSKIDNMLSTSTSSLATQMQDFFTSLQTLVSNAEDPAARQALIGKSEGLVNQFKTTDQYLRDQDKQVNIAIGASVDQINNYAKQIASLNDQISRLTGVGAGASPNNLLDQRDQLVSELNQIVGVEVSVQDGGTYNITMANGYSLVQGSTARQLAAVPSSADPSRTTVAYVDGTAGNIEIPEKLLNTGSLGGILTFRSQDLDQTRNTLGQLALAFAEAFNTQHKAGFDANGDAGEDFFAIGKPAVLQNTKNKGDVAIGATVTDASAVLATDYKISFDNNQWQVTRLASNTTFTVTPDANGKVAFDGLELTFTGTPAVNDSFTLKPVSDAIVNMDVLITDEAKIAMASEEDAGDSDNRNGQALLDLQSNSKTVGGAKSFNDAYASLVSDIGNKTATLKTSSATQGNVVTQLSNQQQSISGVNLDEEYGNLQRFQQYYLANAQVLQTANAIFDALINIR</sequence>